<keyword id="KW-0963">Cytoplasm</keyword>
<keyword id="KW-0378">Hydrolase</keyword>
<keyword id="KW-0546">Nucleotide metabolism</keyword>
<dbReference type="EC" id="3.6.1.9" evidence="1"/>
<dbReference type="EMBL" id="BA000012">
    <property type="protein sequence ID" value="BAB52746.1"/>
    <property type="molecule type" value="Genomic_DNA"/>
</dbReference>
<dbReference type="RefSeq" id="WP_010914061.1">
    <property type="nucleotide sequence ID" value="NC_002678.2"/>
</dbReference>
<dbReference type="SMR" id="Q989F1"/>
<dbReference type="KEGG" id="mlo:mll6452"/>
<dbReference type="PATRIC" id="fig|266835.9.peg.5123"/>
<dbReference type="eggNOG" id="COG0424">
    <property type="taxonomic scope" value="Bacteria"/>
</dbReference>
<dbReference type="HOGENOM" id="CLU_040416_2_0_5"/>
<dbReference type="Proteomes" id="UP000000552">
    <property type="component" value="Chromosome"/>
</dbReference>
<dbReference type="GO" id="GO:0005737">
    <property type="term" value="C:cytoplasm"/>
    <property type="evidence" value="ECO:0007669"/>
    <property type="project" value="UniProtKB-SubCell"/>
</dbReference>
<dbReference type="GO" id="GO:0036218">
    <property type="term" value="F:dTTP diphosphatase activity"/>
    <property type="evidence" value="ECO:0007669"/>
    <property type="project" value="RHEA"/>
</dbReference>
<dbReference type="GO" id="GO:0036221">
    <property type="term" value="F:UTP diphosphatase activity"/>
    <property type="evidence" value="ECO:0007669"/>
    <property type="project" value="RHEA"/>
</dbReference>
<dbReference type="GO" id="GO:0009117">
    <property type="term" value="P:nucleotide metabolic process"/>
    <property type="evidence" value="ECO:0007669"/>
    <property type="project" value="UniProtKB-KW"/>
</dbReference>
<dbReference type="CDD" id="cd00555">
    <property type="entry name" value="Maf"/>
    <property type="match status" value="1"/>
</dbReference>
<dbReference type="FunFam" id="3.90.950.10:FF:000005">
    <property type="entry name" value="7-methyl-GTP pyrophosphatase"/>
    <property type="match status" value="1"/>
</dbReference>
<dbReference type="Gene3D" id="3.90.950.10">
    <property type="match status" value="1"/>
</dbReference>
<dbReference type="HAMAP" id="MF_00528">
    <property type="entry name" value="Maf"/>
    <property type="match status" value="1"/>
</dbReference>
<dbReference type="InterPro" id="IPR029001">
    <property type="entry name" value="ITPase-like_fam"/>
</dbReference>
<dbReference type="InterPro" id="IPR003697">
    <property type="entry name" value="Maf-like"/>
</dbReference>
<dbReference type="NCBIfam" id="TIGR00172">
    <property type="entry name" value="maf"/>
    <property type="match status" value="1"/>
</dbReference>
<dbReference type="NCBIfam" id="NF002401">
    <property type="entry name" value="PRK01441.1"/>
    <property type="match status" value="1"/>
</dbReference>
<dbReference type="PANTHER" id="PTHR43213">
    <property type="entry name" value="BIFUNCTIONAL DTTP/UTP PYROPHOSPHATASE/METHYLTRANSFERASE PROTEIN-RELATED"/>
    <property type="match status" value="1"/>
</dbReference>
<dbReference type="PANTHER" id="PTHR43213:SF5">
    <property type="entry name" value="BIFUNCTIONAL DTTP_UTP PYROPHOSPHATASE_METHYLTRANSFERASE PROTEIN-RELATED"/>
    <property type="match status" value="1"/>
</dbReference>
<dbReference type="Pfam" id="PF02545">
    <property type="entry name" value="Maf"/>
    <property type="match status" value="1"/>
</dbReference>
<dbReference type="PIRSF" id="PIRSF006305">
    <property type="entry name" value="Maf"/>
    <property type="match status" value="1"/>
</dbReference>
<dbReference type="SUPFAM" id="SSF52972">
    <property type="entry name" value="ITPase-like"/>
    <property type="match status" value="1"/>
</dbReference>
<sequence>MSILQKLVLASGSPRRIELLQQAGIEPDRILPADIDETPLRAEHPRSLAKRLSTEKAEKAFASLKTETGYAPSFVLAADTVVAVGRRILPKAETLDDAANCLGLLSGRSHRVYSGICLITPGGKLRQRLVETRVRFKRLPREEIEAYVASGEWRGKAGGYAVQGLAGSFVVKLVGSYTNIVGLPLYETVALLSGEGFKIHQSWLTARP</sequence>
<gene>
    <name type="ordered locus">mll6452</name>
</gene>
<protein>
    <recommendedName>
        <fullName evidence="1">dTTP/UTP pyrophosphatase</fullName>
        <shortName evidence="1">dTTPase/UTPase</shortName>
        <ecNumber evidence="1">3.6.1.9</ecNumber>
    </recommendedName>
    <alternativeName>
        <fullName evidence="1">Nucleoside triphosphate pyrophosphatase</fullName>
    </alternativeName>
    <alternativeName>
        <fullName evidence="1">Nucleotide pyrophosphatase</fullName>
        <shortName evidence="1">Nucleotide PPase</shortName>
    </alternativeName>
</protein>
<evidence type="ECO:0000255" key="1">
    <source>
        <dbReference type="HAMAP-Rule" id="MF_00528"/>
    </source>
</evidence>
<reference key="1">
    <citation type="journal article" date="2000" name="DNA Res.">
        <title>Complete genome structure of the nitrogen-fixing symbiotic bacterium Mesorhizobium loti.</title>
        <authorList>
            <person name="Kaneko T."/>
            <person name="Nakamura Y."/>
            <person name="Sato S."/>
            <person name="Asamizu E."/>
            <person name="Kato T."/>
            <person name="Sasamoto S."/>
            <person name="Watanabe A."/>
            <person name="Idesawa K."/>
            <person name="Ishikawa A."/>
            <person name="Kawashima K."/>
            <person name="Kimura T."/>
            <person name="Kishida Y."/>
            <person name="Kiyokawa C."/>
            <person name="Kohara M."/>
            <person name="Matsumoto M."/>
            <person name="Matsuno A."/>
            <person name="Mochizuki Y."/>
            <person name="Nakayama S."/>
            <person name="Nakazaki N."/>
            <person name="Shimpo S."/>
            <person name="Sugimoto M."/>
            <person name="Takeuchi C."/>
            <person name="Yamada M."/>
            <person name="Tabata S."/>
        </authorList>
    </citation>
    <scope>NUCLEOTIDE SEQUENCE [LARGE SCALE GENOMIC DNA]</scope>
    <source>
        <strain>LMG 29417 / CECT 9101 / MAFF 303099</strain>
    </source>
</reference>
<comment type="function">
    <text evidence="1">Nucleoside triphosphate pyrophosphatase that hydrolyzes dTTP and UTP. May have a dual role in cell division arrest and in preventing the incorporation of modified nucleotides into cellular nucleic acids.</text>
</comment>
<comment type="catalytic activity">
    <reaction evidence="1">
        <text>dTTP + H2O = dTMP + diphosphate + H(+)</text>
        <dbReference type="Rhea" id="RHEA:28534"/>
        <dbReference type="ChEBI" id="CHEBI:15377"/>
        <dbReference type="ChEBI" id="CHEBI:15378"/>
        <dbReference type="ChEBI" id="CHEBI:33019"/>
        <dbReference type="ChEBI" id="CHEBI:37568"/>
        <dbReference type="ChEBI" id="CHEBI:63528"/>
        <dbReference type="EC" id="3.6.1.9"/>
    </reaction>
</comment>
<comment type="catalytic activity">
    <reaction evidence="1">
        <text>UTP + H2O = UMP + diphosphate + H(+)</text>
        <dbReference type="Rhea" id="RHEA:29395"/>
        <dbReference type="ChEBI" id="CHEBI:15377"/>
        <dbReference type="ChEBI" id="CHEBI:15378"/>
        <dbReference type="ChEBI" id="CHEBI:33019"/>
        <dbReference type="ChEBI" id="CHEBI:46398"/>
        <dbReference type="ChEBI" id="CHEBI:57865"/>
        <dbReference type="EC" id="3.6.1.9"/>
    </reaction>
</comment>
<comment type="cofactor">
    <cofactor evidence="1">
        <name>a divalent metal cation</name>
        <dbReference type="ChEBI" id="CHEBI:60240"/>
    </cofactor>
</comment>
<comment type="subcellular location">
    <subcellularLocation>
        <location evidence="1">Cytoplasm</location>
    </subcellularLocation>
</comment>
<comment type="similarity">
    <text evidence="1">Belongs to the Maf family. YhdE subfamily.</text>
</comment>
<accession>Q989F1</accession>
<name>NTPPA_RHILO</name>
<organism>
    <name type="scientific">Mesorhizobium japonicum (strain LMG 29417 / CECT 9101 / MAFF 303099)</name>
    <name type="common">Mesorhizobium loti (strain MAFF 303099)</name>
    <dbReference type="NCBI Taxonomy" id="266835"/>
    <lineage>
        <taxon>Bacteria</taxon>
        <taxon>Pseudomonadati</taxon>
        <taxon>Pseudomonadota</taxon>
        <taxon>Alphaproteobacteria</taxon>
        <taxon>Hyphomicrobiales</taxon>
        <taxon>Phyllobacteriaceae</taxon>
        <taxon>Mesorhizobium</taxon>
    </lineage>
</organism>
<proteinExistence type="inferred from homology"/>
<feature type="chain" id="PRO_0000123053" description="dTTP/UTP pyrophosphatase">
    <location>
        <begin position="1"/>
        <end position="208"/>
    </location>
</feature>
<feature type="active site" description="Proton acceptor" evidence="1">
    <location>
        <position position="79"/>
    </location>
</feature>
<feature type="site" description="Important for substrate specificity" evidence="1">
    <location>
        <position position="15"/>
    </location>
</feature>
<feature type="site" description="Important for substrate specificity" evidence="1">
    <location>
        <position position="80"/>
    </location>
</feature>
<feature type="site" description="Important for substrate specificity" evidence="1">
    <location>
        <position position="163"/>
    </location>
</feature>